<sequence>PEQTAPYGLGNPPRRRRRSLPRRCQCSSARDPSCATFCLRRPWTEARAVPSRKSPADVFQTGKTGATRGELLQRLRDIS</sequence>
<accession>Q28470</accession>
<dbReference type="EMBL" id="U20580">
    <property type="protein sequence ID" value="AAA62439.1"/>
    <property type="molecule type" value="mRNA"/>
</dbReference>
<dbReference type="STRING" id="9541.ENSMFAP00000002418"/>
<dbReference type="eggNOG" id="ENOG502S5KM">
    <property type="taxonomic scope" value="Eukaryota"/>
</dbReference>
<dbReference type="Proteomes" id="UP000233100">
    <property type="component" value="Unplaced"/>
</dbReference>
<dbReference type="GO" id="GO:0005615">
    <property type="term" value="C:extracellular space"/>
    <property type="evidence" value="ECO:0007669"/>
    <property type="project" value="TreeGrafter"/>
</dbReference>
<dbReference type="GO" id="GO:0031708">
    <property type="term" value="F:endothelin B receptor binding"/>
    <property type="evidence" value="ECO:0007669"/>
    <property type="project" value="TreeGrafter"/>
</dbReference>
<dbReference type="GO" id="GO:0005179">
    <property type="term" value="F:hormone activity"/>
    <property type="evidence" value="ECO:0007669"/>
    <property type="project" value="TreeGrafter"/>
</dbReference>
<dbReference type="GO" id="GO:0006874">
    <property type="term" value="P:intracellular calcium ion homeostasis"/>
    <property type="evidence" value="ECO:0007669"/>
    <property type="project" value="TreeGrafter"/>
</dbReference>
<dbReference type="GO" id="GO:0003100">
    <property type="term" value="P:regulation of systemic arterial blood pressure by endothelin"/>
    <property type="evidence" value="ECO:0007669"/>
    <property type="project" value="TreeGrafter"/>
</dbReference>
<dbReference type="GO" id="GO:0019229">
    <property type="term" value="P:regulation of vasoconstriction"/>
    <property type="evidence" value="ECO:0007669"/>
    <property type="project" value="InterPro"/>
</dbReference>
<dbReference type="GO" id="GO:0014826">
    <property type="term" value="P:vein smooth muscle contraction"/>
    <property type="evidence" value="ECO:0007669"/>
    <property type="project" value="TreeGrafter"/>
</dbReference>
<dbReference type="InterPro" id="IPR020475">
    <property type="entry name" value="Endothelin"/>
</dbReference>
<dbReference type="InterPro" id="IPR019764">
    <property type="entry name" value="Endothelin_toxin_CS"/>
</dbReference>
<dbReference type="InterPro" id="IPR001928">
    <property type="entry name" value="Endothln-like_toxin"/>
</dbReference>
<dbReference type="PANTHER" id="PTHR13874">
    <property type="entry name" value="ENDOTHELIN"/>
    <property type="match status" value="1"/>
</dbReference>
<dbReference type="PANTHER" id="PTHR13874:SF9">
    <property type="entry name" value="ENDOTHELIN-2"/>
    <property type="match status" value="1"/>
</dbReference>
<dbReference type="SMART" id="SM00272">
    <property type="entry name" value="END"/>
    <property type="match status" value="1"/>
</dbReference>
<dbReference type="PROSITE" id="PS00270">
    <property type="entry name" value="ENDOTHELIN"/>
    <property type="match status" value="1"/>
</dbReference>
<name>EDN2_MACFA</name>
<feature type="chain" id="PRO_0000146841" description="Endothelin-2">
    <location>
        <begin position="1" status="less than"/>
        <end position="79" status="greater than"/>
    </location>
</feature>
<feature type="region of interest" description="Disordered" evidence="1">
    <location>
        <begin position="1"/>
        <end position="23"/>
    </location>
</feature>
<feature type="region of interest" description="Endothelin-like">
    <location>
        <begin position="24"/>
        <end position="39"/>
    </location>
</feature>
<feature type="region of interest" description="Disordered" evidence="1">
    <location>
        <begin position="51"/>
        <end position="79"/>
    </location>
</feature>
<feature type="non-terminal residue">
    <location>
        <position position="1"/>
    </location>
</feature>
<feature type="non-terminal residue">
    <location>
        <position position="79"/>
    </location>
</feature>
<protein>
    <recommendedName>
        <fullName>Endothelin-2</fullName>
        <shortName>ET-2</shortName>
    </recommendedName>
    <alternativeName>
        <fullName>Preproendothelin-2</fullName>
        <shortName>PPET2</shortName>
    </alternativeName>
</protein>
<reference key="1">
    <citation type="journal article" date="1996" name="J. Cereb. Blood Flow Metab.">
        <title>Increased expression of endothelin B receptor mRNA following subarachnoid hemorrhage in monkeys.</title>
        <authorList>
            <person name="Hino A."/>
            <person name="Tokuyama Y."/>
            <person name="Kobayashi M."/>
            <person name="Yano M."/>
            <person name="Weir B."/>
            <person name="Takeda J."/>
            <person name="Wang X."/>
            <person name="Bell G.I."/>
            <person name="Macdonald R.L."/>
        </authorList>
    </citation>
    <scope>NUCLEOTIDE SEQUENCE [MRNA]</scope>
    <source>
        <tissue>Aorta</tissue>
    </source>
</reference>
<keyword id="KW-0165">Cleavage on pair of basic residues</keyword>
<keyword id="KW-1185">Reference proteome</keyword>
<keyword id="KW-0964">Secreted</keyword>
<keyword id="KW-0838">Vasoactive</keyword>
<keyword id="KW-0839">Vasoconstrictor</keyword>
<gene>
    <name type="primary">EDN2</name>
</gene>
<organism>
    <name type="scientific">Macaca fascicularis</name>
    <name type="common">Crab-eating macaque</name>
    <name type="synonym">Cynomolgus monkey</name>
    <dbReference type="NCBI Taxonomy" id="9541"/>
    <lineage>
        <taxon>Eukaryota</taxon>
        <taxon>Metazoa</taxon>
        <taxon>Chordata</taxon>
        <taxon>Craniata</taxon>
        <taxon>Vertebrata</taxon>
        <taxon>Euteleostomi</taxon>
        <taxon>Mammalia</taxon>
        <taxon>Eutheria</taxon>
        <taxon>Euarchontoglires</taxon>
        <taxon>Primates</taxon>
        <taxon>Haplorrhini</taxon>
        <taxon>Catarrhini</taxon>
        <taxon>Cercopithecidae</taxon>
        <taxon>Cercopithecinae</taxon>
        <taxon>Macaca</taxon>
    </lineage>
</organism>
<comment type="function">
    <text>Endothelins are endothelium-derived vasoconstrictor peptides.</text>
</comment>
<comment type="subcellular location">
    <subcellularLocation>
        <location>Secreted</location>
    </subcellularLocation>
</comment>
<comment type="similarity">
    <text evidence="2">Belongs to the endothelin/sarafotoxin family.</text>
</comment>
<proteinExistence type="evidence at transcript level"/>
<evidence type="ECO:0000256" key="1">
    <source>
        <dbReference type="SAM" id="MobiDB-lite"/>
    </source>
</evidence>
<evidence type="ECO:0000305" key="2"/>